<dbReference type="EC" id="4.3.2.10" evidence="1"/>
<dbReference type="EMBL" id="CP000607">
    <property type="protein sequence ID" value="ABP37350.1"/>
    <property type="molecule type" value="Genomic_DNA"/>
</dbReference>
<dbReference type="SMR" id="A4SFU1"/>
<dbReference type="STRING" id="290318.Cvib_1338"/>
<dbReference type="KEGG" id="pvi:Cvib_1338"/>
<dbReference type="eggNOG" id="COG0107">
    <property type="taxonomic scope" value="Bacteria"/>
</dbReference>
<dbReference type="HOGENOM" id="CLU_048577_4_0_10"/>
<dbReference type="OrthoDB" id="9781903at2"/>
<dbReference type="UniPathway" id="UPA00031">
    <property type="reaction ID" value="UER00010"/>
</dbReference>
<dbReference type="GO" id="GO:0005737">
    <property type="term" value="C:cytoplasm"/>
    <property type="evidence" value="ECO:0007669"/>
    <property type="project" value="UniProtKB-SubCell"/>
</dbReference>
<dbReference type="GO" id="GO:0000107">
    <property type="term" value="F:imidazoleglycerol-phosphate synthase activity"/>
    <property type="evidence" value="ECO:0007669"/>
    <property type="project" value="UniProtKB-UniRule"/>
</dbReference>
<dbReference type="GO" id="GO:0016829">
    <property type="term" value="F:lyase activity"/>
    <property type="evidence" value="ECO:0007669"/>
    <property type="project" value="UniProtKB-KW"/>
</dbReference>
<dbReference type="GO" id="GO:0000105">
    <property type="term" value="P:L-histidine biosynthetic process"/>
    <property type="evidence" value="ECO:0007669"/>
    <property type="project" value="UniProtKB-UniRule"/>
</dbReference>
<dbReference type="CDD" id="cd04731">
    <property type="entry name" value="HisF"/>
    <property type="match status" value="1"/>
</dbReference>
<dbReference type="FunFam" id="3.20.20.70:FF:000006">
    <property type="entry name" value="Imidazole glycerol phosphate synthase subunit HisF"/>
    <property type="match status" value="1"/>
</dbReference>
<dbReference type="Gene3D" id="3.20.20.70">
    <property type="entry name" value="Aldolase class I"/>
    <property type="match status" value="1"/>
</dbReference>
<dbReference type="HAMAP" id="MF_01013">
    <property type="entry name" value="HisF"/>
    <property type="match status" value="1"/>
</dbReference>
<dbReference type="InterPro" id="IPR013785">
    <property type="entry name" value="Aldolase_TIM"/>
</dbReference>
<dbReference type="InterPro" id="IPR006062">
    <property type="entry name" value="His_biosynth"/>
</dbReference>
<dbReference type="InterPro" id="IPR004651">
    <property type="entry name" value="HisF"/>
</dbReference>
<dbReference type="InterPro" id="IPR050064">
    <property type="entry name" value="IGPS_HisA/HisF"/>
</dbReference>
<dbReference type="InterPro" id="IPR011060">
    <property type="entry name" value="RibuloseP-bd_barrel"/>
</dbReference>
<dbReference type="NCBIfam" id="TIGR00735">
    <property type="entry name" value="hisF"/>
    <property type="match status" value="1"/>
</dbReference>
<dbReference type="PANTHER" id="PTHR21235:SF2">
    <property type="entry name" value="IMIDAZOLE GLYCEROL PHOSPHATE SYNTHASE HISHF"/>
    <property type="match status" value="1"/>
</dbReference>
<dbReference type="PANTHER" id="PTHR21235">
    <property type="entry name" value="IMIDAZOLE GLYCEROL PHOSPHATE SYNTHASE SUBUNIT HISF/H IGP SYNTHASE SUBUNIT HISF/H"/>
    <property type="match status" value="1"/>
</dbReference>
<dbReference type="Pfam" id="PF00977">
    <property type="entry name" value="His_biosynth"/>
    <property type="match status" value="1"/>
</dbReference>
<dbReference type="SUPFAM" id="SSF51366">
    <property type="entry name" value="Ribulose-phoshate binding barrel"/>
    <property type="match status" value="1"/>
</dbReference>
<feature type="chain" id="PRO_1000084071" description="Imidazole glycerol phosphate synthase subunit HisF">
    <location>
        <begin position="1"/>
        <end position="251"/>
    </location>
</feature>
<feature type="active site" evidence="1">
    <location>
        <position position="11"/>
    </location>
</feature>
<feature type="active site" evidence="1">
    <location>
        <position position="130"/>
    </location>
</feature>
<protein>
    <recommendedName>
        <fullName evidence="1">Imidazole glycerol phosphate synthase subunit HisF</fullName>
        <ecNumber evidence="1">4.3.2.10</ecNumber>
    </recommendedName>
    <alternativeName>
        <fullName evidence="1">IGP synthase cyclase subunit</fullName>
    </alternativeName>
    <alternativeName>
        <fullName evidence="1">IGP synthase subunit HisF</fullName>
    </alternativeName>
    <alternativeName>
        <fullName evidence="1">ImGP synthase subunit HisF</fullName>
        <shortName evidence="1">IGPS subunit HisF</shortName>
    </alternativeName>
</protein>
<organism>
    <name type="scientific">Chlorobium phaeovibrioides (strain DSM 265 / 1930)</name>
    <name type="common">Prosthecochloris vibrioformis (strain DSM 265)</name>
    <dbReference type="NCBI Taxonomy" id="290318"/>
    <lineage>
        <taxon>Bacteria</taxon>
        <taxon>Pseudomonadati</taxon>
        <taxon>Chlorobiota</taxon>
        <taxon>Chlorobiia</taxon>
        <taxon>Chlorobiales</taxon>
        <taxon>Chlorobiaceae</taxon>
        <taxon>Chlorobium/Pelodictyon group</taxon>
        <taxon>Chlorobium</taxon>
    </lineage>
</organism>
<accession>A4SFU1</accession>
<gene>
    <name evidence="1" type="primary">hisF</name>
    <name type="ordered locus">Cvib_1338</name>
</gene>
<name>HIS6_CHLPM</name>
<evidence type="ECO:0000255" key="1">
    <source>
        <dbReference type="HAMAP-Rule" id="MF_01013"/>
    </source>
</evidence>
<keyword id="KW-0028">Amino-acid biosynthesis</keyword>
<keyword id="KW-0963">Cytoplasm</keyword>
<keyword id="KW-0368">Histidine biosynthesis</keyword>
<keyword id="KW-0456">Lyase</keyword>
<proteinExistence type="inferred from homology"/>
<reference key="1">
    <citation type="submission" date="2007-03" db="EMBL/GenBank/DDBJ databases">
        <title>Complete sequence of Prosthecochloris vibrioformis DSM 265.</title>
        <authorList>
            <consortium name="US DOE Joint Genome Institute"/>
            <person name="Copeland A."/>
            <person name="Lucas S."/>
            <person name="Lapidus A."/>
            <person name="Barry K."/>
            <person name="Detter J.C."/>
            <person name="Glavina del Rio T."/>
            <person name="Hammon N."/>
            <person name="Israni S."/>
            <person name="Pitluck S."/>
            <person name="Schmutz J."/>
            <person name="Larimer F."/>
            <person name="Land M."/>
            <person name="Hauser L."/>
            <person name="Mikhailova N."/>
            <person name="Li T."/>
            <person name="Overmann J."/>
            <person name="Schuster S.C."/>
            <person name="Bryant D.A."/>
            <person name="Richardson P."/>
        </authorList>
    </citation>
    <scope>NUCLEOTIDE SEQUENCE [LARGE SCALE GENOMIC DNA]</scope>
    <source>
        <strain>DSM 265 / 1930</strain>
    </source>
</reference>
<comment type="function">
    <text evidence="1">IGPS catalyzes the conversion of PRFAR and glutamine to IGP, AICAR and glutamate. The HisF subunit catalyzes the cyclization activity that produces IGP and AICAR from PRFAR using the ammonia provided by the HisH subunit.</text>
</comment>
<comment type="catalytic activity">
    <reaction evidence="1">
        <text>5-[(5-phospho-1-deoxy-D-ribulos-1-ylimino)methylamino]-1-(5-phospho-beta-D-ribosyl)imidazole-4-carboxamide + L-glutamine = D-erythro-1-(imidazol-4-yl)glycerol 3-phosphate + 5-amino-1-(5-phospho-beta-D-ribosyl)imidazole-4-carboxamide + L-glutamate + H(+)</text>
        <dbReference type="Rhea" id="RHEA:24793"/>
        <dbReference type="ChEBI" id="CHEBI:15378"/>
        <dbReference type="ChEBI" id="CHEBI:29985"/>
        <dbReference type="ChEBI" id="CHEBI:58278"/>
        <dbReference type="ChEBI" id="CHEBI:58359"/>
        <dbReference type="ChEBI" id="CHEBI:58475"/>
        <dbReference type="ChEBI" id="CHEBI:58525"/>
        <dbReference type="EC" id="4.3.2.10"/>
    </reaction>
</comment>
<comment type="pathway">
    <text evidence="1">Amino-acid biosynthesis; L-histidine biosynthesis; L-histidine from 5-phospho-alpha-D-ribose 1-diphosphate: step 5/9.</text>
</comment>
<comment type="subunit">
    <text evidence="1">Heterodimer of HisH and HisF.</text>
</comment>
<comment type="subcellular location">
    <subcellularLocation>
        <location evidence="1">Cytoplasm</location>
    </subcellularLocation>
</comment>
<comment type="similarity">
    <text evidence="1">Belongs to the HisA/HisF family.</text>
</comment>
<sequence length="251" mass="27414">MLAKRIIPCLDVRDGRVVKGINFEGLRDAGSILEQARFYNNELADELVFLDISASLESRKTTLEEVLKVSGEVFIPLTVGGGINSVERAKEVFLHGADKVSVNTAAVNNPELISRIAEKYGSQAVVVAVDIKKIGDRYIVHTHSGKQPTEYEALEWALKVQELGAGEILLTSMDRDGTKEGYDNESLALISTSVHIPVIASGGAGSLEHLYDGFTKGRADAALAASIFHFRQHSIREAKQYLHDRGITVRL</sequence>